<proteinExistence type="evidence at transcript level"/>
<reference key="1">
    <citation type="journal article" date="2005" name="Nature">
        <title>The map-based sequence of the rice genome.</title>
        <authorList>
            <consortium name="International rice genome sequencing project (IRGSP)"/>
        </authorList>
    </citation>
    <scope>NUCLEOTIDE SEQUENCE [LARGE SCALE GENOMIC DNA]</scope>
    <source>
        <strain>cv. Nipponbare</strain>
    </source>
</reference>
<reference key="2">
    <citation type="journal article" date="2008" name="Nucleic Acids Res.">
        <title>The rice annotation project database (RAP-DB): 2008 update.</title>
        <authorList>
            <consortium name="The rice annotation project (RAP)"/>
        </authorList>
    </citation>
    <scope>GENOME REANNOTATION</scope>
    <source>
        <strain>cv. Nipponbare</strain>
    </source>
</reference>
<reference key="3">
    <citation type="journal article" date="2013" name="Rice">
        <title>Improvement of the Oryza sativa Nipponbare reference genome using next generation sequence and optical map data.</title>
        <authorList>
            <person name="Kawahara Y."/>
            <person name="de la Bastide M."/>
            <person name="Hamilton J.P."/>
            <person name="Kanamori H."/>
            <person name="McCombie W.R."/>
            <person name="Ouyang S."/>
            <person name="Schwartz D.C."/>
            <person name="Tanaka T."/>
            <person name="Wu J."/>
            <person name="Zhou S."/>
            <person name="Childs K.L."/>
            <person name="Davidson R.M."/>
            <person name="Lin H."/>
            <person name="Quesada-Ocampo L."/>
            <person name="Vaillancourt B."/>
            <person name="Sakai H."/>
            <person name="Lee S.S."/>
            <person name="Kim J."/>
            <person name="Numa H."/>
            <person name="Itoh T."/>
            <person name="Buell C.R."/>
            <person name="Matsumoto T."/>
        </authorList>
    </citation>
    <scope>GENOME REANNOTATION</scope>
    <source>
        <strain>cv. Nipponbare</strain>
    </source>
</reference>
<reference key="4">
    <citation type="journal article" date="2005" name="PLoS Biol.">
        <title>The genomes of Oryza sativa: a history of duplications.</title>
        <authorList>
            <person name="Yu J."/>
            <person name="Wang J."/>
            <person name="Lin W."/>
            <person name="Li S."/>
            <person name="Li H."/>
            <person name="Zhou J."/>
            <person name="Ni P."/>
            <person name="Dong W."/>
            <person name="Hu S."/>
            <person name="Zeng C."/>
            <person name="Zhang J."/>
            <person name="Zhang Y."/>
            <person name="Li R."/>
            <person name="Xu Z."/>
            <person name="Li S."/>
            <person name="Li X."/>
            <person name="Zheng H."/>
            <person name="Cong L."/>
            <person name="Lin L."/>
            <person name="Yin J."/>
            <person name="Geng J."/>
            <person name="Li G."/>
            <person name="Shi J."/>
            <person name="Liu J."/>
            <person name="Lv H."/>
            <person name="Li J."/>
            <person name="Wang J."/>
            <person name="Deng Y."/>
            <person name="Ran L."/>
            <person name="Shi X."/>
            <person name="Wang X."/>
            <person name="Wu Q."/>
            <person name="Li C."/>
            <person name="Ren X."/>
            <person name="Wang J."/>
            <person name="Wang X."/>
            <person name="Li D."/>
            <person name="Liu D."/>
            <person name="Zhang X."/>
            <person name="Ji Z."/>
            <person name="Zhao W."/>
            <person name="Sun Y."/>
            <person name="Zhang Z."/>
            <person name="Bao J."/>
            <person name="Han Y."/>
            <person name="Dong L."/>
            <person name="Ji J."/>
            <person name="Chen P."/>
            <person name="Wu S."/>
            <person name="Liu J."/>
            <person name="Xiao Y."/>
            <person name="Bu D."/>
            <person name="Tan J."/>
            <person name="Yang L."/>
            <person name="Ye C."/>
            <person name="Zhang J."/>
            <person name="Xu J."/>
            <person name="Zhou Y."/>
            <person name="Yu Y."/>
            <person name="Zhang B."/>
            <person name="Zhuang S."/>
            <person name="Wei H."/>
            <person name="Liu B."/>
            <person name="Lei M."/>
            <person name="Yu H."/>
            <person name="Li Y."/>
            <person name="Xu H."/>
            <person name="Wei S."/>
            <person name="He X."/>
            <person name="Fang L."/>
            <person name="Zhang Z."/>
            <person name="Zhang Y."/>
            <person name="Huang X."/>
            <person name="Su Z."/>
            <person name="Tong W."/>
            <person name="Li J."/>
            <person name="Tong Z."/>
            <person name="Li S."/>
            <person name="Ye J."/>
            <person name="Wang L."/>
            <person name="Fang L."/>
            <person name="Lei T."/>
            <person name="Chen C.-S."/>
            <person name="Chen H.-C."/>
            <person name="Xu Z."/>
            <person name="Li H."/>
            <person name="Huang H."/>
            <person name="Zhang F."/>
            <person name="Xu H."/>
            <person name="Li N."/>
            <person name="Zhao C."/>
            <person name="Li S."/>
            <person name="Dong L."/>
            <person name="Huang Y."/>
            <person name="Li L."/>
            <person name="Xi Y."/>
            <person name="Qi Q."/>
            <person name="Li W."/>
            <person name="Zhang B."/>
            <person name="Hu W."/>
            <person name="Zhang Y."/>
            <person name="Tian X."/>
            <person name="Jiao Y."/>
            <person name="Liang X."/>
            <person name="Jin J."/>
            <person name="Gao L."/>
            <person name="Zheng W."/>
            <person name="Hao B."/>
            <person name="Liu S.-M."/>
            <person name="Wang W."/>
            <person name="Yuan L."/>
            <person name="Cao M."/>
            <person name="McDermott J."/>
            <person name="Samudrala R."/>
            <person name="Wang J."/>
            <person name="Wong G.K.-S."/>
            <person name="Yang H."/>
        </authorList>
    </citation>
    <scope>NUCLEOTIDE SEQUENCE [LARGE SCALE GENOMIC DNA]</scope>
    <source>
        <strain>cv. Nipponbare</strain>
    </source>
</reference>
<reference key="5">
    <citation type="journal article" date="2003" name="Science">
        <title>Collection, mapping, and annotation of over 28,000 cDNA clones from japonica rice.</title>
        <authorList>
            <consortium name="The rice full-length cDNA consortium"/>
        </authorList>
    </citation>
    <scope>NUCLEOTIDE SEQUENCE [LARGE SCALE MRNA]</scope>
    <source>
        <strain>cv. Nipponbare</strain>
    </source>
</reference>
<evidence type="ECO:0000250" key="1"/>
<evidence type="ECO:0000250" key="2">
    <source>
        <dbReference type="UniProtKB" id="Q9SZI2"/>
    </source>
</evidence>
<evidence type="ECO:0000255" key="3"/>
<evidence type="ECO:0000256" key="4">
    <source>
        <dbReference type="SAM" id="MobiDB-lite"/>
    </source>
</evidence>
<evidence type="ECO:0000305" key="5"/>
<comment type="function">
    <text evidence="1">May modulate chromatin structure by regulation of nucleosome assembly/disassembly.</text>
</comment>
<comment type="subcellular location">
    <subcellularLocation>
        <location evidence="1">Nucleus</location>
    </subcellularLocation>
    <subcellularLocation>
        <location evidence="1">Cytoplasm</location>
    </subcellularLocation>
</comment>
<comment type="domain">
    <text>The acidic domain is probably involved in the interaction with histones.</text>
</comment>
<comment type="similarity">
    <text evidence="5">Belongs to the nucleosome assembly protein (NAP) family.</text>
</comment>
<accession>Q5VND6</accession>
<accession>A0A0P0WSD3</accession>
<feature type="chain" id="PRO_0000423685" description="Nucleosome assembly protein 1;1">
    <location>
        <begin position="1"/>
        <end position="375"/>
    </location>
</feature>
<feature type="propeptide" id="PRO_0000423686" description="Removed in mature form" evidence="2">
    <location>
        <begin position="376"/>
        <end position="378"/>
    </location>
</feature>
<feature type="region of interest" description="Disordered" evidence="4">
    <location>
        <begin position="306"/>
        <end position="378"/>
    </location>
</feature>
<feature type="coiled-coil region" evidence="3">
    <location>
        <begin position="33"/>
        <end position="87"/>
    </location>
</feature>
<feature type="short sequence motif" description="Nuclear export signal" evidence="3">
    <location>
        <begin position="54"/>
        <end position="69"/>
    </location>
</feature>
<feature type="short sequence motif" description="Nuclear localization signal" evidence="3">
    <location>
        <begin position="230"/>
        <end position="235"/>
    </location>
</feature>
<feature type="short sequence motif" description="Nuclear localization signal" evidence="3">
    <location>
        <begin position="348"/>
        <end position="352"/>
    </location>
</feature>
<feature type="compositionally biased region" description="Acidic residues" evidence="4">
    <location>
        <begin position="308"/>
        <end position="344"/>
    </location>
</feature>
<feature type="compositionally biased region" description="Low complexity" evidence="4">
    <location>
        <begin position="356"/>
        <end position="378"/>
    </location>
</feature>
<feature type="modified residue" description="Cysteine methyl ester" evidence="2">
    <location>
        <position position="375"/>
    </location>
</feature>
<feature type="lipid moiety-binding region" description="S-farnesyl cysteine" evidence="2">
    <location>
        <position position="375"/>
    </location>
</feature>
<protein>
    <recommendedName>
        <fullName>Nucleosome assembly protein 1;1</fullName>
        <shortName>OsNAP1;1</shortName>
    </recommendedName>
    <alternativeName>
        <fullName>Nucleosome assembly protein 1-like 1</fullName>
        <shortName>OsNAP1_L1</shortName>
    </alternativeName>
</protein>
<name>NAP1A_ORYSJ</name>
<sequence>MGGDKENLDLSDLNASLPAAAAALSAEDRAGLVNALKDKLQSLAGQHTDVLEALSPNVRKRVEYLREIQGQHDEIELKFFEERAALEAKYQKLYEPLYTKRYNIVNGVVEVDGGNDEPASENAAEGKDADAKGVPDFWLTAMKTNEVLSEEIQERDEPALKYLKDIKWARIDDPKGFKLDFFFDTNPFFKNSVLTKTYHMVDEDEPILEKAIGTEIEWYPGKNLTQKILKKKPKKGSKNAKPITKTEVCESFFNFFSPPQVPDDDEDIDEDTADELQGQMEHDYDIGTTIRDKIIPHAVSWFTGEAVQAEDFDDMEDDEEDDEDDDEDEEEEEEDEDEDEDDEEEKSKPKKKSAGKPKLPSKGGAQGGADQPADCKQQ</sequence>
<keyword id="KW-0143">Chaperone</keyword>
<keyword id="KW-0175">Coiled coil</keyword>
<keyword id="KW-0963">Cytoplasm</keyword>
<keyword id="KW-0449">Lipoprotein</keyword>
<keyword id="KW-0488">Methylation</keyword>
<keyword id="KW-0539">Nucleus</keyword>
<keyword id="KW-0636">Prenylation</keyword>
<keyword id="KW-1185">Reference proteome</keyword>
<gene>
    <name type="primary">NAP1;1</name>
    <name type="synonym">NAP1_L1</name>
    <name type="ordered locus">Os06g0149400</name>
    <name type="ordered locus">LOC_Os06g05660</name>
    <name type="ORF">OsJ_20136</name>
    <name type="ORF">P0624B04.18</name>
    <name type="ORF">P0710H01.4</name>
</gene>
<dbReference type="EMBL" id="AP003632">
    <property type="protein sequence ID" value="BAD68630.1"/>
    <property type="molecule type" value="Genomic_DNA"/>
</dbReference>
<dbReference type="EMBL" id="AP004806">
    <property type="protein sequence ID" value="BAD69039.1"/>
    <property type="molecule type" value="Genomic_DNA"/>
</dbReference>
<dbReference type="EMBL" id="AP008212">
    <property type="protein sequence ID" value="BAF18730.1"/>
    <property type="molecule type" value="Genomic_DNA"/>
</dbReference>
<dbReference type="EMBL" id="AP014962">
    <property type="protein sequence ID" value="BAS96173.1"/>
    <property type="molecule type" value="Genomic_DNA"/>
</dbReference>
<dbReference type="EMBL" id="CM000143">
    <property type="protein sequence ID" value="EEE65092.1"/>
    <property type="molecule type" value="Genomic_DNA"/>
</dbReference>
<dbReference type="EMBL" id="AK071177">
    <property type="protein sequence ID" value="BAG92354.1"/>
    <property type="molecule type" value="mRNA"/>
</dbReference>
<dbReference type="RefSeq" id="NP_001408013.1">
    <property type="nucleotide sequence ID" value="NM_001421084.1"/>
</dbReference>
<dbReference type="RefSeq" id="XP_015644392.1">
    <property type="nucleotide sequence ID" value="XM_015788906.1"/>
</dbReference>
<dbReference type="SMR" id="Q5VND6"/>
<dbReference type="FunCoup" id="Q5VND6">
    <property type="interactions" value="2717"/>
</dbReference>
<dbReference type="STRING" id="39947.Q5VND6"/>
<dbReference type="iPTMnet" id="Q5VND6"/>
<dbReference type="PaxDb" id="39947-Q5VND6"/>
<dbReference type="EnsemblPlants" id="Os06t0149400-01">
    <property type="protein sequence ID" value="Os06t0149400-01"/>
    <property type="gene ID" value="Os06g0149400"/>
</dbReference>
<dbReference type="GeneID" id="4340137"/>
<dbReference type="Gramene" id="Os06t0149400-01">
    <property type="protein sequence ID" value="Os06t0149400-01"/>
    <property type="gene ID" value="Os06g0149400"/>
</dbReference>
<dbReference type="KEGG" id="dosa:Os06g0149400"/>
<dbReference type="eggNOG" id="KOG1507">
    <property type="taxonomic scope" value="Eukaryota"/>
</dbReference>
<dbReference type="HOGENOM" id="CLU_038841_4_1_1"/>
<dbReference type="InParanoid" id="Q5VND6"/>
<dbReference type="OMA" id="AAECKQN"/>
<dbReference type="OrthoDB" id="27325at2759"/>
<dbReference type="Proteomes" id="UP000000763">
    <property type="component" value="Chromosome 6"/>
</dbReference>
<dbReference type="Proteomes" id="UP000007752">
    <property type="component" value="Chromosome 6"/>
</dbReference>
<dbReference type="Proteomes" id="UP000059680">
    <property type="component" value="Chromosome 6"/>
</dbReference>
<dbReference type="GO" id="GO:0000785">
    <property type="term" value="C:chromatin"/>
    <property type="evidence" value="ECO:0000318"/>
    <property type="project" value="GO_Central"/>
</dbReference>
<dbReference type="GO" id="GO:0005737">
    <property type="term" value="C:cytoplasm"/>
    <property type="evidence" value="ECO:0007669"/>
    <property type="project" value="UniProtKB-SubCell"/>
</dbReference>
<dbReference type="GO" id="GO:0005634">
    <property type="term" value="C:nucleus"/>
    <property type="evidence" value="ECO:0000318"/>
    <property type="project" value="GO_Central"/>
</dbReference>
<dbReference type="GO" id="GO:0003682">
    <property type="term" value="F:chromatin binding"/>
    <property type="evidence" value="ECO:0000318"/>
    <property type="project" value="GO_Central"/>
</dbReference>
<dbReference type="GO" id="GO:0042393">
    <property type="term" value="F:histone binding"/>
    <property type="evidence" value="ECO:0000318"/>
    <property type="project" value="GO_Central"/>
</dbReference>
<dbReference type="GO" id="GO:0000724">
    <property type="term" value="P:double-strand break repair via homologous recombination"/>
    <property type="evidence" value="ECO:0007669"/>
    <property type="project" value="UniProtKB-ARBA"/>
</dbReference>
<dbReference type="GO" id="GO:0006334">
    <property type="term" value="P:nucleosome assembly"/>
    <property type="evidence" value="ECO:0000318"/>
    <property type="project" value="GO_Central"/>
</dbReference>
<dbReference type="FunFam" id="1.20.5.1500:FF:000001">
    <property type="entry name" value="Nucleosome assembly protein 1-like 1"/>
    <property type="match status" value="1"/>
</dbReference>
<dbReference type="FunFam" id="3.30.1120.90:FF:000005">
    <property type="entry name" value="Nucleosome assembly protein11"/>
    <property type="match status" value="1"/>
</dbReference>
<dbReference type="Gene3D" id="1.20.5.1500">
    <property type="match status" value="1"/>
</dbReference>
<dbReference type="Gene3D" id="3.30.1120.90">
    <property type="entry name" value="Nucleosome assembly protein"/>
    <property type="match status" value="1"/>
</dbReference>
<dbReference type="InterPro" id="IPR037231">
    <property type="entry name" value="NAP-like_sf"/>
</dbReference>
<dbReference type="InterPro" id="IPR002164">
    <property type="entry name" value="NAP_family"/>
</dbReference>
<dbReference type="PANTHER" id="PTHR11875">
    <property type="entry name" value="TESTIS-SPECIFIC Y-ENCODED PROTEIN"/>
    <property type="match status" value="1"/>
</dbReference>
<dbReference type="Pfam" id="PF00956">
    <property type="entry name" value="NAP"/>
    <property type="match status" value="1"/>
</dbReference>
<dbReference type="SUPFAM" id="SSF143113">
    <property type="entry name" value="NAP-like"/>
    <property type="match status" value="1"/>
</dbReference>
<organism>
    <name type="scientific">Oryza sativa subsp. japonica</name>
    <name type="common">Rice</name>
    <dbReference type="NCBI Taxonomy" id="39947"/>
    <lineage>
        <taxon>Eukaryota</taxon>
        <taxon>Viridiplantae</taxon>
        <taxon>Streptophyta</taxon>
        <taxon>Embryophyta</taxon>
        <taxon>Tracheophyta</taxon>
        <taxon>Spermatophyta</taxon>
        <taxon>Magnoliopsida</taxon>
        <taxon>Liliopsida</taxon>
        <taxon>Poales</taxon>
        <taxon>Poaceae</taxon>
        <taxon>BOP clade</taxon>
        <taxon>Oryzoideae</taxon>
        <taxon>Oryzeae</taxon>
        <taxon>Oryzinae</taxon>
        <taxon>Oryza</taxon>
        <taxon>Oryza sativa</taxon>
    </lineage>
</organism>